<dbReference type="EMBL" id="AB062778">
    <property type="protein sequence ID" value="BAB60689.1"/>
    <property type="molecule type" value="Genomic_DNA"/>
</dbReference>
<dbReference type="EMBL" id="CU329671">
    <property type="protein sequence ID" value="CAA21269.1"/>
    <property type="molecule type" value="Genomic_DNA"/>
</dbReference>
<dbReference type="PIR" id="T39987">
    <property type="entry name" value="T39987"/>
</dbReference>
<dbReference type="RefSeq" id="NP_596079.1">
    <property type="nucleotide sequence ID" value="NM_001021991.2"/>
</dbReference>
<dbReference type="SMR" id="O74783"/>
<dbReference type="BioGRID" id="276884">
    <property type="interactions" value="29"/>
</dbReference>
<dbReference type="FunCoup" id="O74783">
    <property type="interactions" value="531"/>
</dbReference>
<dbReference type="IntAct" id="O74783">
    <property type="interactions" value="1"/>
</dbReference>
<dbReference type="STRING" id="284812.O74783"/>
<dbReference type="PaxDb" id="4896-SPBC25B2.11.1"/>
<dbReference type="EnsemblFungi" id="SPBC25B2.11.1">
    <property type="protein sequence ID" value="SPBC25B2.11.1:pep"/>
    <property type="gene ID" value="SPBC25B2.11"/>
</dbReference>
<dbReference type="GeneID" id="2540355"/>
<dbReference type="KEGG" id="spo:2540355"/>
<dbReference type="PomBase" id="SPBC25B2.11">
    <property type="gene designation" value="pof2"/>
</dbReference>
<dbReference type="VEuPathDB" id="FungiDB:SPBC25B2.11"/>
<dbReference type="eggNOG" id="KOG1947">
    <property type="taxonomic scope" value="Eukaryota"/>
</dbReference>
<dbReference type="HOGENOM" id="CLU_010840_2_1_1"/>
<dbReference type="InParanoid" id="O74783"/>
<dbReference type="OMA" id="LCNRIRY"/>
<dbReference type="PhylomeDB" id="O74783"/>
<dbReference type="PRO" id="PR:O74783"/>
<dbReference type="Proteomes" id="UP000002485">
    <property type="component" value="Chromosome II"/>
</dbReference>
<dbReference type="GO" id="GO:0005737">
    <property type="term" value="C:cytoplasm"/>
    <property type="evidence" value="ECO:0000318"/>
    <property type="project" value="GO_Central"/>
</dbReference>
<dbReference type="GO" id="GO:0005739">
    <property type="term" value="C:mitochondrion"/>
    <property type="evidence" value="ECO:0007005"/>
    <property type="project" value="PomBase"/>
</dbReference>
<dbReference type="GO" id="GO:0000151">
    <property type="term" value="C:ubiquitin ligase complex"/>
    <property type="evidence" value="ECO:0000255"/>
    <property type="project" value="PomBase"/>
</dbReference>
<dbReference type="GO" id="GO:1990756">
    <property type="term" value="F:ubiquitin-like ligase-substrate adaptor activity"/>
    <property type="evidence" value="ECO:0000255"/>
    <property type="project" value="PomBase"/>
</dbReference>
<dbReference type="GO" id="GO:0031146">
    <property type="term" value="P:SCF-dependent proteasomal ubiquitin-dependent protein catabolic process"/>
    <property type="evidence" value="ECO:0000266"/>
    <property type="project" value="PomBase"/>
</dbReference>
<dbReference type="FunFam" id="3.80.10.10:FF:002830">
    <property type="entry name" value="SCF E3 ubiquitin ligase complex F-box protein pof2"/>
    <property type="match status" value="1"/>
</dbReference>
<dbReference type="Gene3D" id="3.80.10.10">
    <property type="entry name" value="Ribonuclease Inhibitor"/>
    <property type="match status" value="3"/>
</dbReference>
<dbReference type="InterPro" id="IPR036047">
    <property type="entry name" value="F-box-like_dom_sf"/>
</dbReference>
<dbReference type="InterPro" id="IPR001810">
    <property type="entry name" value="F-box_dom"/>
</dbReference>
<dbReference type="InterPro" id="IPR001611">
    <property type="entry name" value="Leu-rich_rpt"/>
</dbReference>
<dbReference type="InterPro" id="IPR006553">
    <property type="entry name" value="Leu-rich_rpt_Cys-con_subtyp"/>
</dbReference>
<dbReference type="InterPro" id="IPR032675">
    <property type="entry name" value="LRR_dom_sf"/>
</dbReference>
<dbReference type="PANTHER" id="PTHR13318">
    <property type="entry name" value="PARTNER OF PAIRED, ISOFORM B-RELATED"/>
    <property type="match status" value="1"/>
</dbReference>
<dbReference type="Pfam" id="PF12937">
    <property type="entry name" value="F-box-like"/>
    <property type="match status" value="1"/>
</dbReference>
<dbReference type="Pfam" id="PF13516">
    <property type="entry name" value="LRR_6"/>
    <property type="match status" value="2"/>
</dbReference>
<dbReference type="SMART" id="SM00367">
    <property type="entry name" value="LRR_CC"/>
    <property type="match status" value="8"/>
</dbReference>
<dbReference type="SUPFAM" id="SSF81383">
    <property type="entry name" value="F-box domain"/>
    <property type="match status" value="1"/>
</dbReference>
<dbReference type="SUPFAM" id="SSF52047">
    <property type="entry name" value="RNI-like"/>
    <property type="match status" value="1"/>
</dbReference>
<dbReference type="PROSITE" id="PS50181">
    <property type="entry name" value="FBOX"/>
    <property type="match status" value="1"/>
</dbReference>
<accession>O74783</accession>
<comment type="function">
    <text evidence="1">Involved in substrate recognition in ubiquitin-dependent degradation.</text>
</comment>
<comment type="subunit">
    <text evidence="1 3">Part of a SCF E3 ubiquitin ligase complex (By similarity). Interacts with skp1.</text>
</comment>
<comment type="subcellular location">
    <subcellularLocation>
        <location evidence="4">Mitochondrion</location>
    </subcellularLocation>
</comment>
<organism>
    <name type="scientific">Schizosaccharomyces pombe (strain 972 / ATCC 24843)</name>
    <name type="common">Fission yeast</name>
    <dbReference type="NCBI Taxonomy" id="284812"/>
    <lineage>
        <taxon>Eukaryota</taxon>
        <taxon>Fungi</taxon>
        <taxon>Dikarya</taxon>
        <taxon>Ascomycota</taxon>
        <taxon>Taphrinomycotina</taxon>
        <taxon>Schizosaccharomycetes</taxon>
        <taxon>Schizosaccharomycetales</taxon>
        <taxon>Schizosaccharomycetaceae</taxon>
        <taxon>Schizosaccharomyces</taxon>
    </lineage>
</organism>
<sequence>MRVPNEVCFNILSYLEADELRCKSTVCTSWRNFIIPTLWEKVVFQNEAQLNNFFDTLQYSKDVSYYFRYLRKLNCSRVRKFLTDKHLMLMTLATGISRLNLSGCTRISEPLIGKLLYQNLNLVTINFSNIFSLPANILEYISDNCPNLKALNIGNCGLVEDTGMVQIIKRCPYLNRLIIPNCRKLTDVSLQILSEKEDLIELDISGCEGFHNADTLSRLVSRNRGLKELSMDGCTELSHFITFLNLNCELDAMRALSLNNLPDLKDSDIELITCKFSKLNSLFLSKCIGLTDSSLLSLTKLSQSLTTLHLGHCYEITDIGVQCLLKSCKNITYIDFGGCLRLSDIAVSAIAKLPYLQRVGLVKCICLTDLSVILLSGSFSRNLERVHLSYCIGLTAKSVSYLMYNCKTLKHLSVTGINSILCTELRSFSRPIPDGINPSQVPVFCAFTKVEIDLFREFIRNRI</sequence>
<name>POF2_SCHPO</name>
<keyword id="KW-0433">Leucine-rich repeat</keyword>
<keyword id="KW-0496">Mitochondrion</keyword>
<keyword id="KW-1185">Reference proteome</keyword>
<keyword id="KW-0677">Repeat</keyword>
<keyword id="KW-0833">Ubl conjugation pathway</keyword>
<proteinExistence type="evidence at protein level"/>
<evidence type="ECO:0000250" key="1"/>
<evidence type="ECO:0000255" key="2">
    <source>
        <dbReference type="PROSITE-ProRule" id="PRU00080"/>
    </source>
</evidence>
<evidence type="ECO:0000269" key="3">
    <source>
    </source>
</evidence>
<evidence type="ECO:0000269" key="4">
    <source>
    </source>
</evidence>
<reference key="1">
    <citation type="submission" date="2001-06" db="EMBL/GenBank/DDBJ databases">
        <title>Systematic genome-wide analysis of F-box protein-encoding genes in fission yeast.</title>
        <authorList>
            <person name="Harrison C.L."/>
            <person name="Toda T."/>
        </authorList>
    </citation>
    <scope>NUCLEOTIDE SEQUENCE [GENOMIC DNA]</scope>
</reference>
<reference key="2">
    <citation type="journal article" date="2002" name="Nature">
        <title>The genome sequence of Schizosaccharomyces pombe.</title>
        <authorList>
            <person name="Wood V."/>
            <person name="Gwilliam R."/>
            <person name="Rajandream M.A."/>
            <person name="Lyne M.H."/>
            <person name="Lyne R."/>
            <person name="Stewart A."/>
            <person name="Sgouros J.G."/>
            <person name="Peat N."/>
            <person name="Hayles J."/>
            <person name="Baker S.G."/>
            <person name="Basham D."/>
            <person name="Bowman S."/>
            <person name="Brooks K."/>
            <person name="Brown D."/>
            <person name="Brown S."/>
            <person name="Chillingworth T."/>
            <person name="Churcher C.M."/>
            <person name="Collins M."/>
            <person name="Connor R."/>
            <person name="Cronin A."/>
            <person name="Davis P."/>
            <person name="Feltwell T."/>
            <person name="Fraser A."/>
            <person name="Gentles S."/>
            <person name="Goble A."/>
            <person name="Hamlin N."/>
            <person name="Harris D.E."/>
            <person name="Hidalgo J."/>
            <person name="Hodgson G."/>
            <person name="Holroyd S."/>
            <person name="Hornsby T."/>
            <person name="Howarth S."/>
            <person name="Huckle E.J."/>
            <person name="Hunt S."/>
            <person name="Jagels K."/>
            <person name="James K.D."/>
            <person name="Jones L."/>
            <person name="Jones M."/>
            <person name="Leather S."/>
            <person name="McDonald S."/>
            <person name="McLean J."/>
            <person name="Mooney P."/>
            <person name="Moule S."/>
            <person name="Mungall K.L."/>
            <person name="Murphy L.D."/>
            <person name="Niblett D."/>
            <person name="Odell C."/>
            <person name="Oliver K."/>
            <person name="O'Neil S."/>
            <person name="Pearson D."/>
            <person name="Quail M.A."/>
            <person name="Rabbinowitsch E."/>
            <person name="Rutherford K.M."/>
            <person name="Rutter S."/>
            <person name="Saunders D."/>
            <person name="Seeger K."/>
            <person name="Sharp S."/>
            <person name="Skelton J."/>
            <person name="Simmonds M.N."/>
            <person name="Squares R."/>
            <person name="Squares S."/>
            <person name="Stevens K."/>
            <person name="Taylor K."/>
            <person name="Taylor R.G."/>
            <person name="Tivey A."/>
            <person name="Walsh S.V."/>
            <person name="Warren T."/>
            <person name="Whitehead S."/>
            <person name="Woodward J.R."/>
            <person name="Volckaert G."/>
            <person name="Aert R."/>
            <person name="Robben J."/>
            <person name="Grymonprez B."/>
            <person name="Weltjens I."/>
            <person name="Vanstreels E."/>
            <person name="Rieger M."/>
            <person name="Schaefer M."/>
            <person name="Mueller-Auer S."/>
            <person name="Gabel C."/>
            <person name="Fuchs M."/>
            <person name="Duesterhoeft A."/>
            <person name="Fritzc C."/>
            <person name="Holzer E."/>
            <person name="Moestl D."/>
            <person name="Hilbert H."/>
            <person name="Borzym K."/>
            <person name="Langer I."/>
            <person name="Beck A."/>
            <person name="Lehrach H."/>
            <person name="Reinhardt R."/>
            <person name="Pohl T.M."/>
            <person name="Eger P."/>
            <person name="Zimmermann W."/>
            <person name="Wedler H."/>
            <person name="Wambutt R."/>
            <person name="Purnelle B."/>
            <person name="Goffeau A."/>
            <person name="Cadieu E."/>
            <person name="Dreano S."/>
            <person name="Gloux S."/>
            <person name="Lelaure V."/>
            <person name="Mottier S."/>
            <person name="Galibert F."/>
            <person name="Aves S.J."/>
            <person name="Xiang Z."/>
            <person name="Hunt C."/>
            <person name="Moore K."/>
            <person name="Hurst S.M."/>
            <person name="Lucas M."/>
            <person name="Rochet M."/>
            <person name="Gaillardin C."/>
            <person name="Tallada V.A."/>
            <person name="Garzon A."/>
            <person name="Thode G."/>
            <person name="Daga R.R."/>
            <person name="Cruzado L."/>
            <person name="Jimenez J."/>
            <person name="Sanchez M."/>
            <person name="del Rey F."/>
            <person name="Benito J."/>
            <person name="Dominguez A."/>
            <person name="Revuelta J.L."/>
            <person name="Moreno S."/>
            <person name="Armstrong J."/>
            <person name="Forsburg S.L."/>
            <person name="Cerutti L."/>
            <person name="Lowe T."/>
            <person name="McCombie W.R."/>
            <person name="Paulsen I."/>
            <person name="Potashkin J."/>
            <person name="Shpakovski G.V."/>
            <person name="Ussery D."/>
            <person name="Barrell B.G."/>
            <person name="Nurse P."/>
        </authorList>
    </citation>
    <scope>NUCLEOTIDE SEQUENCE [LARGE SCALE GENOMIC DNA]</scope>
    <source>
        <strain>972 / ATCC 24843</strain>
    </source>
</reference>
<reference key="3">
    <citation type="journal article" date="2004" name="Genes Cells">
        <title>Molecular interactions of fission yeast Skp1 and its role in the DNA damage checkpoint.</title>
        <authorList>
            <person name="Lehmann A."/>
            <person name="Katayama S."/>
            <person name="Harrison C."/>
            <person name="Dhut S."/>
            <person name="Kitamura K."/>
            <person name="McDonald N."/>
            <person name="Toda T."/>
        </authorList>
    </citation>
    <scope>INTERACTION WITH SKP1</scope>
</reference>
<reference key="4">
    <citation type="journal article" date="2006" name="Nat. Biotechnol.">
        <title>ORFeome cloning and global analysis of protein localization in the fission yeast Schizosaccharomyces pombe.</title>
        <authorList>
            <person name="Matsuyama A."/>
            <person name="Arai R."/>
            <person name="Yashiroda Y."/>
            <person name="Shirai A."/>
            <person name="Kamata A."/>
            <person name="Sekido S."/>
            <person name="Kobayashi Y."/>
            <person name="Hashimoto A."/>
            <person name="Hamamoto M."/>
            <person name="Hiraoka Y."/>
            <person name="Horinouchi S."/>
            <person name="Yoshida M."/>
        </authorList>
    </citation>
    <scope>SUBCELLULAR LOCATION [LARGE SCALE ANALYSIS]</scope>
</reference>
<feature type="chain" id="PRO_0000119972" description="SCF E3 ubiquitin ligase complex F-box protein pof2">
    <location>
        <begin position="1"/>
        <end position="463"/>
    </location>
</feature>
<feature type="domain" description="F-box" evidence="2">
    <location>
        <begin position="1"/>
        <end position="42"/>
    </location>
</feature>
<feature type="repeat" description="LRR 1">
    <location>
        <begin position="145"/>
        <end position="170"/>
    </location>
</feature>
<feature type="repeat" description="LRR 2">
    <location>
        <begin position="171"/>
        <end position="196"/>
    </location>
</feature>
<feature type="repeat" description="LRR 3">
    <location>
        <begin position="198"/>
        <end position="220"/>
    </location>
</feature>
<feature type="repeat" description="LRR 4">
    <location>
        <begin position="225"/>
        <end position="247"/>
    </location>
</feature>
<feature type="repeat" description="LRR 5">
    <location>
        <begin position="249"/>
        <end position="271"/>
    </location>
</feature>
<feature type="repeat" description="LRR 6">
    <location>
        <begin position="278"/>
        <end position="299"/>
    </location>
</feature>
<feature type="repeat" description="LRR 7">
    <location>
        <begin position="304"/>
        <end position="326"/>
    </location>
</feature>
<feature type="repeat" description="LRR 8">
    <location>
        <begin position="328"/>
        <end position="353"/>
    </location>
</feature>
<feature type="repeat" description="LRR 9">
    <location>
        <begin position="354"/>
        <end position="378"/>
    </location>
</feature>
<feature type="repeat" description="LRR 10">
    <location>
        <begin position="380"/>
        <end position="405"/>
    </location>
</feature>
<protein>
    <recommendedName>
        <fullName>SCF E3 ubiquitin ligase complex F-box protein pof2</fullName>
    </recommendedName>
    <alternativeName>
        <fullName>F-box and leucine-rich repeat protein pof2</fullName>
    </alternativeName>
    <alternativeName>
        <fullName>F-box/LRR-repeat protein pof2</fullName>
        <shortName>F-box protein pof2</shortName>
    </alternativeName>
</protein>
<gene>
    <name type="primary">pof2</name>
    <name type="ORF">SPBC25B2.11</name>
</gene>